<name>URE3_ENT38</name>
<keyword id="KW-0963">Cytoplasm</keyword>
<keyword id="KW-0378">Hydrolase</keyword>
<feature type="chain" id="PRO_1000062144" description="Urease subunit gamma">
    <location>
        <begin position="1"/>
        <end position="100"/>
    </location>
</feature>
<organism>
    <name type="scientific">Enterobacter sp. (strain 638)</name>
    <dbReference type="NCBI Taxonomy" id="399742"/>
    <lineage>
        <taxon>Bacteria</taxon>
        <taxon>Pseudomonadati</taxon>
        <taxon>Pseudomonadota</taxon>
        <taxon>Gammaproteobacteria</taxon>
        <taxon>Enterobacterales</taxon>
        <taxon>Enterobacteriaceae</taxon>
        <taxon>Enterobacter</taxon>
    </lineage>
</organism>
<evidence type="ECO:0000255" key="1">
    <source>
        <dbReference type="HAMAP-Rule" id="MF_00739"/>
    </source>
</evidence>
<sequence length="100" mass="10972">MELTPREKDKLLLFTAALVAERRLARGVTLNYPESVALISAFIMEGARDGQTVAELMEAGRHVLTRAQVMEGVPEMIPDIQVEATFPDGSKLVTVHNPIV</sequence>
<dbReference type="EC" id="3.5.1.5" evidence="1"/>
<dbReference type="EMBL" id="CP000653">
    <property type="protein sequence ID" value="ABP62123.1"/>
    <property type="molecule type" value="Genomic_DNA"/>
</dbReference>
<dbReference type="RefSeq" id="WP_015960451.1">
    <property type="nucleotide sequence ID" value="NC_009436.1"/>
</dbReference>
<dbReference type="SMR" id="A4WEJ3"/>
<dbReference type="STRING" id="399742.Ent638_3464"/>
<dbReference type="GeneID" id="93306430"/>
<dbReference type="KEGG" id="ent:Ent638_3464"/>
<dbReference type="eggNOG" id="COG0831">
    <property type="taxonomic scope" value="Bacteria"/>
</dbReference>
<dbReference type="HOGENOM" id="CLU_145825_1_0_6"/>
<dbReference type="OrthoDB" id="9797217at2"/>
<dbReference type="UniPathway" id="UPA00258">
    <property type="reaction ID" value="UER00370"/>
</dbReference>
<dbReference type="Proteomes" id="UP000000230">
    <property type="component" value="Chromosome"/>
</dbReference>
<dbReference type="GO" id="GO:0005737">
    <property type="term" value="C:cytoplasm"/>
    <property type="evidence" value="ECO:0007669"/>
    <property type="project" value="UniProtKB-SubCell"/>
</dbReference>
<dbReference type="GO" id="GO:0016151">
    <property type="term" value="F:nickel cation binding"/>
    <property type="evidence" value="ECO:0007669"/>
    <property type="project" value="InterPro"/>
</dbReference>
<dbReference type="GO" id="GO:0009039">
    <property type="term" value="F:urease activity"/>
    <property type="evidence" value="ECO:0007669"/>
    <property type="project" value="UniProtKB-UniRule"/>
</dbReference>
<dbReference type="GO" id="GO:0043419">
    <property type="term" value="P:urea catabolic process"/>
    <property type="evidence" value="ECO:0007669"/>
    <property type="project" value="UniProtKB-UniRule"/>
</dbReference>
<dbReference type="CDD" id="cd00390">
    <property type="entry name" value="Urease_gamma"/>
    <property type="match status" value="1"/>
</dbReference>
<dbReference type="Gene3D" id="3.30.280.10">
    <property type="entry name" value="Urease, gamma-like subunit"/>
    <property type="match status" value="1"/>
</dbReference>
<dbReference type="HAMAP" id="MF_00739">
    <property type="entry name" value="Urease_gamma"/>
    <property type="match status" value="1"/>
</dbReference>
<dbReference type="InterPro" id="IPR012010">
    <property type="entry name" value="Urease_gamma"/>
</dbReference>
<dbReference type="InterPro" id="IPR002026">
    <property type="entry name" value="Urease_gamma/gamma-beta_su"/>
</dbReference>
<dbReference type="InterPro" id="IPR036463">
    <property type="entry name" value="Urease_gamma_sf"/>
</dbReference>
<dbReference type="InterPro" id="IPR050069">
    <property type="entry name" value="Urease_subunit"/>
</dbReference>
<dbReference type="NCBIfam" id="NF009712">
    <property type="entry name" value="PRK13241.1"/>
    <property type="match status" value="1"/>
</dbReference>
<dbReference type="NCBIfam" id="TIGR00193">
    <property type="entry name" value="urease_gam"/>
    <property type="match status" value="1"/>
</dbReference>
<dbReference type="PANTHER" id="PTHR33569">
    <property type="entry name" value="UREASE"/>
    <property type="match status" value="1"/>
</dbReference>
<dbReference type="PANTHER" id="PTHR33569:SF1">
    <property type="entry name" value="UREASE"/>
    <property type="match status" value="1"/>
</dbReference>
<dbReference type="Pfam" id="PF00547">
    <property type="entry name" value="Urease_gamma"/>
    <property type="match status" value="1"/>
</dbReference>
<dbReference type="PIRSF" id="PIRSF001223">
    <property type="entry name" value="Urease_gamma"/>
    <property type="match status" value="1"/>
</dbReference>
<dbReference type="SUPFAM" id="SSF54111">
    <property type="entry name" value="Urease, gamma-subunit"/>
    <property type="match status" value="1"/>
</dbReference>
<proteinExistence type="inferred from homology"/>
<gene>
    <name evidence="1" type="primary">ureA</name>
    <name type="ordered locus">Ent638_3464</name>
</gene>
<reference key="1">
    <citation type="journal article" date="2010" name="PLoS Genet.">
        <title>Genome sequence of the plant growth promoting endophytic bacterium Enterobacter sp. 638.</title>
        <authorList>
            <person name="Taghavi S."/>
            <person name="van der Lelie D."/>
            <person name="Hoffman A."/>
            <person name="Zhang Y.B."/>
            <person name="Walla M.D."/>
            <person name="Vangronsveld J."/>
            <person name="Newman L."/>
            <person name="Monchy S."/>
        </authorList>
    </citation>
    <scope>NUCLEOTIDE SEQUENCE [LARGE SCALE GENOMIC DNA]</scope>
    <source>
        <strain>638</strain>
    </source>
</reference>
<comment type="catalytic activity">
    <reaction evidence="1">
        <text>urea + 2 H2O + H(+) = hydrogencarbonate + 2 NH4(+)</text>
        <dbReference type="Rhea" id="RHEA:20557"/>
        <dbReference type="ChEBI" id="CHEBI:15377"/>
        <dbReference type="ChEBI" id="CHEBI:15378"/>
        <dbReference type="ChEBI" id="CHEBI:16199"/>
        <dbReference type="ChEBI" id="CHEBI:17544"/>
        <dbReference type="ChEBI" id="CHEBI:28938"/>
        <dbReference type="EC" id="3.5.1.5"/>
    </reaction>
</comment>
<comment type="pathway">
    <text evidence="1">Nitrogen metabolism; urea degradation; CO(2) and NH(3) from urea (urease route): step 1/1.</text>
</comment>
<comment type="subunit">
    <text evidence="1">Heterotrimer of UreA (gamma), UreB (beta) and UreC (alpha) subunits. Three heterotrimers associate to form the active enzyme.</text>
</comment>
<comment type="subcellular location">
    <subcellularLocation>
        <location evidence="1">Cytoplasm</location>
    </subcellularLocation>
</comment>
<comment type="similarity">
    <text evidence="1">Belongs to the urease gamma subunit family.</text>
</comment>
<accession>A4WEJ3</accession>
<protein>
    <recommendedName>
        <fullName evidence="1">Urease subunit gamma</fullName>
        <ecNumber evidence="1">3.5.1.5</ecNumber>
    </recommendedName>
    <alternativeName>
        <fullName evidence="1">Urea amidohydrolase subunit gamma</fullName>
    </alternativeName>
</protein>